<accession>O34375</accession>
<accession>Q795D8</accession>
<comment type="function">
    <text evidence="3 4 5">The main function of the Min system is to promote the disassembly of the cytokinetic ring after cell division, thereby ensuring that division occurs only once per cell cycle. MinJ acts as a bridge between DivIVA and MinD. May modulate activity and localization of MinD and MinC through direct interaction with MinD.</text>
</comment>
<comment type="subunit">
    <text evidence="3 4">Interacts directly with DivIVA and MinD.</text>
</comment>
<comment type="subcellular location">
    <subcellularLocation>
        <location evidence="3 4 5">Cell membrane</location>
        <topology evidence="3 4 5">Multi-pass membrane protein</topology>
    </subcellularLocation>
    <text>Localization depends on DivIVA and on the state of the cell cycle. Present at both cell poles in non-dividing cells. As cells prepare to divide, moves from poles to mid-cell. Then, after division is completed, stays associated with new poles, but also moves back to old poles.</text>
</comment>
<comment type="disruption phenotype">
    <text evidence="3 4">Mutants show defects in homologous recombination, swarming motility and cell division.</text>
</comment>
<comment type="similarity">
    <text evidence="6">Belongs to the MinJ family.</text>
</comment>
<dbReference type="EMBL" id="AF017113">
    <property type="protein sequence ID" value="AAC67265.1"/>
    <property type="molecule type" value="Genomic_DNA"/>
</dbReference>
<dbReference type="EMBL" id="AL009126">
    <property type="protein sequence ID" value="CAB15539.1"/>
    <property type="molecule type" value="Genomic_DNA"/>
</dbReference>
<dbReference type="PIR" id="F70042">
    <property type="entry name" value="F70042"/>
</dbReference>
<dbReference type="RefSeq" id="NP_391402.1">
    <property type="nucleotide sequence ID" value="NC_000964.3"/>
</dbReference>
<dbReference type="RefSeq" id="WP_003242631.1">
    <property type="nucleotide sequence ID" value="NZ_OZ025638.1"/>
</dbReference>
<dbReference type="SMR" id="O34375"/>
<dbReference type="FunCoup" id="O34375">
    <property type="interactions" value="57"/>
</dbReference>
<dbReference type="STRING" id="224308.BSU35220"/>
<dbReference type="PaxDb" id="224308-BSU35220"/>
<dbReference type="EnsemblBacteria" id="CAB15539">
    <property type="protein sequence ID" value="CAB15539"/>
    <property type="gene ID" value="BSU_35220"/>
</dbReference>
<dbReference type="GeneID" id="936668"/>
<dbReference type="KEGG" id="bsu:BSU35220"/>
<dbReference type="PATRIC" id="fig|224308.179.peg.3812"/>
<dbReference type="eggNOG" id="COG0265">
    <property type="taxonomic scope" value="Bacteria"/>
</dbReference>
<dbReference type="InParanoid" id="O34375"/>
<dbReference type="OrthoDB" id="198399at2"/>
<dbReference type="PhylomeDB" id="O34375"/>
<dbReference type="BioCyc" id="BSUB:BSU35220-MONOMER"/>
<dbReference type="Proteomes" id="UP000001570">
    <property type="component" value="Chromosome"/>
</dbReference>
<dbReference type="GO" id="GO:0005886">
    <property type="term" value="C:plasma membrane"/>
    <property type="evidence" value="ECO:0007669"/>
    <property type="project" value="UniProtKB-SubCell"/>
</dbReference>
<dbReference type="GO" id="GO:0000917">
    <property type="term" value="P:division septum assembly"/>
    <property type="evidence" value="ECO:0007669"/>
    <property type="project" value="UniProtKB-KW"/>
</dbReference>
<dbReference type="Gene3D" id="2.30.42.10">
    <property type="match status" value="1"/>
</dbReference>
<dbReference type="InterPro" id="IPR001478">
    <property type="entry name" value="PDZ"/>
</dbReference>
<dbReference type="InterPro" id="IPR041489">
    <property type="entry name" value="PDZ_6"/>
</dbReference>
<dbReference type="InterPro" id="IPR036034">
    <property type="entry name" value="PDZ_sf"/>
</dbReference>
<dbReference type="Pfam" id="PF17820">
    <property type="entry name" value="PDZ_6"/>
    <property type="match status" value="1"/>
</dbReference>
<dbReference type="SMART" id="SM00228">
    <property type="entry name" value="PDZ"/>
    <property type="match status" value="1"/>
</dbReference>
<dbReference type="SUPFAM" id="SSF50156">
    <property type="entry name" value="PDZ domain-like"/>
    <property type="match status" value="1"/>
</dbReference>
<dbReference type="PROSITE" id="PS50106">
    <property type="entry name" value="PDZ"/>
    <property type="match status" value="1"/>
</dbReference>
<protein>
    <recommendedName>
        <fullName>Cell division topological determinant MinJ</fullName>
    </recommendedName>
</protein>
<keyword id="KW-0131">Cell cycle</keyword>
<keyword id="KW-0132">Cell division</keyword>
<keyword id="KW-1003">Cell membrane</keyword>
<keyword id="KW-0472">Membrane</keyword>
<keyword id="KW-1185">Reference proteome</keyword>
<keyword id="KW-0717">Septation</keyword>
<keyword id="KW-0812">Transmembrane</keyword>
<keyword id="KW-1133">Transmembrane helix</keyword>
<reference key="1">
    <citation type="submission" date="1997-11" db="EMBL/GenBank/DDBJ databases">
        <title>Nucleotide sequence of the 300-304 chromosomal segment of Bacillus subtilis.</title>
        <authorList>
            <person name="Lazarevic V."/>
            <person name="Soldo B."/>
            <person name="Rivolta C."/>
            <person name="Reynolds S."/>
            <person name="Mauel C."/>
            <person name="Karamata D."/>
        </authorList>
    </citation>
    <scope>NUCLEOTIDE SEQUENCE [GENOMIC DNA]</scope>
</reference>
<reference key="2">
    <citation type="journal article" date="1997" name="Nature">
        <title>The complete genome sequence of the Gram-positive bacterium Bacillus subtilis.</title>
        <authorList>
            <person name="Kunst F."/>
            <person name="Ogasawara N."/>
            <person name="Moszer I."/>
            <person name="Albertini A.M."/>
            <person name="Alloni G."/>
            <person name="Azevedo V."/>
            <person name="Bertero M.G."/>
            <person name="Bessieres P."/>
            <person name="Bolotin A."/>
            <person name="Borchert S."/>
            <person name="Borriss R."/>
            <person name="Boursier L."/>
            <person name="Brans A."/>
            <person name="Braun M."/>
            <person name="Brignell S.C."/>
            <person name="Bron S."/>
            <person name="Brouillet S."/>
            <person name="Bruschi C.V."/>
            <person name="Caldwell B."/>
            <person name="Capuano V."/>
            <person name="Carter N.M."/>
            <person name="Choi S.-K."/>
            <person name="Codani J.-J."/>
            <person name="Connerton I.F."/>
            <person name="Cummings N.J."/>
            <person name="Daniel R.A."/>
            <person name="Denizot F."/>
            <person name="Devine K.M."/>
            <person name="Duesterhoeft A."/>
            <person name="Ehrlich S.D."/>
            <person name="Emmerson P.T."/>
            <person name="Entian K.-D."/>
            <person name="Errington J."/>
            <person name="Fabret C."/>
            <person name="Ferrari E."/>
            <person name="Foulger D."/>
            <person name="Fritz C."/>
            <person name="Fujita M."/>
            <person name="Fujita Y."/>
            <person name="Fuma S."/>
            <person name="Galizzi A."/>
            <person name="Galleron N."/>
            <person name="Ghim S.-Y."/>
            <person name="Glaser P."/>
            <person name="Goffeau A."/>
            <person name="Golightly E.J."/>
            <person name="Grandi G."/>
            <person name="Guiseppi G."/>
            <person name="Guy B.J."/>
            <person name="Haga K."/>
            <person name="Haiech J."/>
            <person name="Harwood C.R."/>
            <person name="Henaut A."/>
            <person name="Hilbert H."/>
            <person name="Holsappel S."/>
            <person name="Hosono S."/>
            <person name="Hullo M.-F."/>
            <person name="Itaya M."/>
            <person name="Jones L.-M."/>
            <person name="Joris B."/>
            <person name="Karamata D."/>
            <person name="Kasahara Y."/>
            <person name="Klaerr-Blanchard M."/>
            <person name="Klein C."/>
            <person name="Kobayashi Y."/>
            <person name="Koetter P."/>
            <person name="Koningstein G."/>
            <person name="Krogh S."/>
            <person name="Kumano M."/>
            <person name="Kurita K."/>
            <person name="Lapidus A."/>
            <person name="Lardinois S."/>
            <person name="Lauber J."/>
            <person name="Lazarevic V."/>
            <person name="Lee S.-M."/>
            <person name="Levine A."/>
            <person name="Liu H."/>
            <person name="Masuda S."/>
            <person name="Mauel C."/>
            <person name="Medigue C."/>
            <person name="Medina N."/>
            <person name="Mellado R.P."/>
            <person name="Mizuno M."/>
            <person name="Moestl D."/>
            <person name="Nakai S."/>
            <person name="Noback M."/>
            <person name="Noone D."/>
            <person name="O'Reilly M."/>
            <person name="Ogawa K."/>
            <person name="Ogiwara A."/>
            <person name="Oudega B."/>
            <person name="Park S.-H."/>
            <person name="Parro V."/>
            <person name="Pohl T.M."/>
            <person name="Portetelle D."/>
            <person name="Porwollik S."/>
            <person name="Prescott A.M."/>
            <person name="Presecan E."/>
            <person name="Pujic P."/>
            <person name="Purnelle B."/>
            <person name="Rapoport G."/>
            <person name="Rey M."/>
            <person name="Reynolds S."/>
            <person name="Rieger M."/>
            <person name="Rivolta C."/>
            <person name="Rocha E."/>
            <person name="Roche B."/>
            <person name="Rose M."/>
            <person name="Sadaie Y."/>
            <person name="Sato T."/>
            <person name="Scanlan E."/>
            <person name="Schleich S."/>
            <person name="Schroeter R."/>
            <person name="Scoffone F."/>
            <person name="Sekiguchi J."/>
            <person name="Sekowska A."/>
            <person name="Seror S.J."/>
            <person name="Serror P."/>
            <person name="Shin B.-S."/>
            <person name="Soldo B."/>
            <person name="Sorokin A."/>
            <person name="Tacconi E."/>
            <person name="Takagi T."/>
            <person name="Takahashi H."/>
            <person name="Takemaru K."/>
            <person name="Takeuchi M."/>
            <person name="Tamakoshi A."/>
            <person name="Tanaka T."/>
            <person name="Terpstra P."/>
            <person name="Tognoni A."/>
            <person name="Tosato V."/>
            <person name="Uchiyama S."/>
            <person name="Vandenbol M."/>
            <person name="Vannier F."/>
            <person name="Vassarotti A."/>
            <person name="Viari A."/>
            <person name="Wambutt R."/>
            <person name="Wedler E."/>
            <person name="Wedler H."/>
            <person name="Weitzenegger T."/>
            <person name="Winters P."/>
            <person name="Wipat A."/>
            <person name="Yamamoto H."/>
            <person name="Yamane K."/>
            <person name="Yasumoto K."/>
            <person name="Yata K."/>
            <person name="Yoshida K."/>
            <person name="Yoshikawa H.-F."/>
            <person name="Zumstein E."/>
            <person name="Yoshikawa H."/>
            <person name="Danchin A."/>
        </authorList>
    </citation>
    <scope>NUCLEOTIDE SEQUENCE [LARGE SCALE GENOMIC DNA]</scope>
    <source>
        <strain>168</strain>
    </source>
</reference>
<reference key="3">
    <citation type="journal article" date="2005" name="J. Bacteriol.">
        <title>Swarming differentiation and swimming motility in Bacillus subtilis are controlled by swrA, a newly identified dicistronic operon.</title>
        <authorList>
            <person name="Calvio C."/>
            <person name="Celandroni F."/>
            <person name="Ghelardi E."/>
            <person name="Amati G."/>
            <person name="Salvetti S."/>
            <person name="Ceciliani F."/>
            <person name="Galizzi A."/>
            <person name="Senesi S."/>
        </authorList>
    </citation>
    <scope>PRELIMINARY FUNCTION</scope>
</reference>
<reference key="4">
    <citation type="journal article" date="2008" name="Mol. Microbiol.">
        <title>MinJ (YvjD) is a topological determinant of cell division in Bacillus subtilis.</title>
        <authorList>
            <person name="Patrick J.E."/>
            <person name="Kearns D.B."/>
        </authorList>
    </citation>
    <scope>FUNCTION</scope>
    <scope>INTERACTION WITH DIVIVA AND MIND</scope>
    <scope>SUBCELLULAR LOCATION</scope>
    <scope>DISRUPTION PHENOTYPE</scope>
    <source>
        <strain>3610</strain>
    </source>
</reference>
<reference key="5">
    <citation type="journal article" date="2008" name="Mol. Microbiol.">
        <title>A novel component of the division-site selection system of Bacillus subtilis and a new mode of action for the division inhibitor MinCD.</title>
        <authorList>
            <person name="Bramkamp M."/>
            <person name="Emmins R."/>
            <person name="Weston L."/>
            <person name="Donovan C."/>
            <person name="Daniel R.A."/>
            <person name="Errington J."/>
        </authorList>
    </citation>
    <scope>FUNCTION</scope>
    <scope>INTERACTION WITH DIVIVA AND MIND</scope>
    <scope>SUBCELLULAR LOCATION</scope>
    <scope>DISRUPTION PHENOTYPE</scope>
    <source>
        <strain>168</strain>
    </source>
</reference>
<reference key="6">
    <citation type="journal article" date="2010" name="PLoS ONE">
        <title>The MinCDJ system in Bacillus subtilis prevents minicell formation by promoting divisome disassembly.</title>
        <authorList>
            <person name="van Baarle S."/>
            <person name="Bramkamp M."/>
        </authorList>
    </citation>
    <scope>FUNCTION OF THE MIN SYSTEM</scope>
    <scope>SUBCELLULAR LOCATION</scope>
</reference>
<sequence length="397" mass="43666">MSVQWGIELLKSAGLFFLHPLFWFFIIITLAFGYVRIKRERKTFHTRIADIYDDLKFTYTKGLIPGLLLSVILGGLGISIPLGLLAIIAVITAAAAFTLRANWMSAAYIVSVSMLIGFGLQIYQAEPFLERFPQGFAVVWPAVAVFLGLLIITEGAVAYRSAHVRTSPALVVSSRGLPIGQQLANRVWLLPLFLLVPGNGLESHLSWWPVFTVPGGSFHFLWIPYFVGFGQRVQGSLPETSIRITAKRVCILGLAVAVLGAASLLWTPLAGAAVCTALLGRIFLSIKQRVNDNAAPFYFSKRDQGLMVLGIIPNTPAEDLELKIGEIITKVNGIPVKNVSDFYEALQHNRAYVKLEIIGLNGEIRFDQRASYEGEHHELGILFVKDDREDEAVASGS</sequence>
<organism>
    <name type="scientific">Bacillus subtilis (strain 168)</name>
    <dbReference type="NCBI Taxonomy" id="224308"/>
    <lineage>
        <taxon>Bacteria</taxon>
        <taxon>Bacillati</taxon>
        <taxon>Bacillota</taxon>
        <taxon>Bacilli</taxon>
        <taxon>Bacillales</taxon>
        <taxon>Bacillaceae</taxon>
        <taxon>Bacillus</taxon>
    </lineage>
</organism>
<evidence type="ECO:0000255" key="1"/>
<evidence type="ECO:0000255" key="2">
    <source>
        <dbReference type="PROSITE-ProRule" id="PRU00143"/>
    </source>
</evidence>
<evidence type="ECO:0000269" key="3">
    <source>
    </source>
</evidence>
<evidence type="ECO:0000269" key="4">
    <source>
    </source>
</evidence>
<evidence type="ECO:0000269" key="5">
    <source>
    </source>
</evidence>
<evidence type="ECO:0000305" key="6"/>
<feature type="chain" id="PRO_0000360825" description="Cell division topological determinant MinJ">
    <location>
        <begin position="1"/>
        <end position="397"/>
    </location>
</feature>
<feature type="transmembrane region" description="Helical" evidence="1">
    <location>
        <begin position="15"/>
        <end position="35"/>
    </location>
</feature>
<feature type="transmembrane region" description="Helical" evidence="1">
    <location>
        <begin position="71"/>
        <end position="91"/>
    </location>
</feature>
<feature type="transmembrane region" description="Helical" evidence="1">
    <location>
        <begin position="103"/>
        <end position="123"/>
    </location>
</feature>
<feature type="transmembrane region" description="Helical" evidence="1">
    <location>
        <begin position="132"/>
        <end position="152"/>
    </location>
</feature>
<feature type="transmembrane region" description="Helical" evidence="1">
    <location>
        <begin position="187"/>
        <end position="207"/>
    </location>
</feature>
<feature type="transmembrane region" description="Helical" evidence="1">
    <location>
        <begin position="210"/>
        <end position="230"/>
    </location>
</feature>
<feature type="transmembrane region" description="Helical" evidence="1">
    <location>
        <begin position="249"/>
        <end position="269"/>
    </location>
</feature>
<feature type="domain" description="PDZ" evidence="2">
    <location>
        <begin position="279"/>
        <end position="363"/>
    </location>
</feature>
<gene>
    <name type="primary">minJ</name>
    <name type="synonym">swrAB</name>
    <name type="synonym">yvjD</name>
    <name type="ordered locus">BSU35220</name>
</gene>
<name>MINJ_BACSU</name>
<proteinExistence type="evidence at protein level"/>